<organism>
    <name type="scientific">Methylococcus capsulatus (strain ATCC 33009 / NCIMB 11132 / Bath)</name>
    <dbReference type="NCBI Taxonomy" id="243233"/>
    <lineage>
        <taxon>Bacteria</taxon>
        <taxon>Pseudomonadati</taxon>
        <taxon>Pseudomonadota</taxon>
        <taxon>Gammaproteobacteria</taxon>
        <taxon>Methylococcales</taxon>
        <taxon>Methylococcaceae</taxon>
        <taxon>Methylococcus</taxon>
    </lineage>
</organism>
<proteinExistence type="inferred from homology"/>
<name>SPEE_METCA</name>
<comment type="function">
    <text evidence="1">Catalyzes the irreversible transfer of a propylamine group from the amino donor S-adenosylmethioninamine (decarboxy-AdoMet) to putrescine (1,4-diaminobutane) to yield spermidine.</text>
</comment>
<comment type="catalytic activity">
    <reaction evidence="1">
        <text>S-adenosyl 3-(methylsulfanyl)propylamine + putrescine = S-methyl-5'-thioadenosine + spermidine + H(+)</text>
        <dbReference type="Rhea" id="RHEA:12721"/>
        <dbReference type="ChEBI" id="CHEBI:15378"/>
        <dbReference type="ChEBI" id="CHEBI:17509"/>
        <dbReference type="ChEBI" id="CHEBI:57443"/>
        <dbReference type="ChEBI" id="CHEBI:57834"/>
        <dbReference type="ChEBI" id="CHEBI:326268"/>
        <dbReference type="EC" id="2.5.1.16"/>
    </reaction>
</comment>
<comment type="pathway">
    <text evidence="1">Amine and polyamine biosynthesis; spermidine biosynthesis; spermidine from putrescine: step 1/1.</text>
</comment>
<comment type="subunit">
    <text evidence="1">Homodimer or homotetramer.</text>
</comment>
<comment type="subcellular location">
    <subcellularLocation>
        <location evidence="1">Cytoplasm</location>
    </subcellularLocation>
</comment>
<comment type="similarity">
    <text evidence="1">Belongs to the spermidine/spermine synthase family.</text>
</comment>
<reference key="1">
    <citation type="journal article" date="2004" name="PLoS Biol.">
        <title>Genomic insights into methanotrophy: the complete genome sequence of Methylococcus capsulatus (Bath).</title>
        <authorList>
            <person name="Ward N.L."/>
            <person name="Larsen O."/>
            <person name="Sakwa J."/>
            <person name="Bruseth L."/>
            <person name="Khouri H.M."/>
            <person name="Durkin A.S."/>
            <person name="Dimitrov G."/>
            <person name="Jiang L."/>
            <person name="Scanlan D."/>
            <person name="Kang K.H."/>
            <person name="Lewis M.R."/>
            <person name="Nelson K.E."/>
            <person name="Methe B.A."/>
            <person name="Wu M."/>
            <person name="Heidelberg J.F."/>
            <person name="Paulsen I.T."/>
            <person name="Fouts D.E."/>
            <person name="Ravel J."/>
            <person name="Tettelin H."/>
            <person name="Ren Q."/>
            <person name="Read T.D."/>
            <person name="DeBoy R.T."/>
            <person name="Seshadri R."/>
            <person name="Salzberg S.L."/>
            <person name="Jensen H.B."/>
            <person name="Birkeland N.K."/>
            <person name="Nelson W.C."/>
            <person name="Dodson R.J."/>
            <person name="Grindhaug S.H."/>
            <person name="Holt I.E."/>
            <person name="Eidhammer I."/>
            <person name="Jonasen I."/>
            <person name="Vanaken S."/>
            <person name="Utterback T.R."/>
            <person name="Feldblyum T.V."/>
            <person name="Fraser C.M."/>
            <person name="Lillehaug J.R."/>
            <person name="Eisen J.A."/>
        </authorList>
    </citation>
    <scope>NUCLEOTIDE SEQUENCE [LARGE SCALE GENOMIC DNA]</scope>
    <source>
        <strain>ATCC 33009 / NCIMB 11132 / Bath</strain>
    </source>
</reference>
<evidence type="ECO:0000255" key="1">
    <source>
        <dbReference type="HAMAP-Rule" id="MF_00198"/>
    </source>
</evidence>
<protein>
    <recommendedName>
        <fullName evidence="1">Polyamine aminopropyltransferase</fullName>
    </recommendedName>
    <alternativeName>
        <fullName evidence="1">Putrescine aminopropyltransferase</fullName>
        <shortName evidence="1">PAPT</shortName>
    </alternativeName>
    <alternativeName>
        <fullName evidence="1">Spermidine synthase</fullName>
        <shortName evidence="1">SPDS</shortName>
        <shortName evidence="1">SPDSY</shortName>
        <ecNumber evidence="1">2.5.1.16</ecNumber>
    </alternativeName>
</protein>
<keyword id="KW-0963">Cytoplasm</keyword>
<keyword id="KW-0620">Polyamine biosynthesis</keyword>
<keyword id="KW-1185">Reference proteome</keyword>
<keyword id="KW-0745">Spermidine biosynthesis</keyword>
<keyword id="KW-0808">Transferase</keyword>
<sequence length="285" mass="32418">MCDAQDWFTESYPDNGSALSLKIRAKLHEEQTPFQRIEIYDTESFGKLMVIDGCTMVSDRDNFLYHEMMTHPVLYTHPAPKTVWIIGGGDCGSLREVLKHSEVEKAVQIDIDERVTRLAERYFPELCEANGDPRAELLFIDGIQWVKEAPDGCVDVIIVDSTDPVGPAEGLFNEAFFRQCHRCLRTDGILVQQSESPLFHLPLIASMHRIMRQAGFAQTRTLFFPQFIYPSGWWSATMAGKGDLNRFRADAAEAKLFPTRYYNADIHRAAFAVPEFFGDALRELV</sequence>
<gene>
    <name evidence="1" type="primary">speE</name>
    <name type="ordered locus">MCA2046</name>
</gene>
<accession>Q606H1</accession>
<feature type="chain" id="PRO_1000012004" description="Polyamine aminopropyltransferase">
    <location>
        <begin position="1"/>
        <end position="285"/>
    </location>
</feature>
<feature type="domain" description="PABS" evidence="1">
    <location>
        <begin position="5"/>
        <end position="241"/>
    </location>
</feature>
<feature type="active site" description="Proton acceptor" evidence="1">
    <location>
        <position position="160"/>
    </location>
</feature>
<feature type="binding site" evidence="1">
    <location>
        <position position="35"/>
    </location>
    <ligand>
        <name>S-methyl-5'-thioadenosine</name>
        <dbReference type="ChEBI" id="CHEBI:17509"/>
    </ligand>
</feature>
<feature type="binding site" evidence="1">
    <location>
        <position position="66"/>
    </location>
    <ligand>
        <name>spermidine</name>
        <dbReference type="ChEBI" id="CHEBI:57834"/>
    </ligand>
</feature>
<feature type="binding site" evidence="1">
    <location>
        <position position="90"/>
    </location>
    <ligand>
        <name>spermidine</name>
        <dbReference type="ChEBI" id="CHEBI:57834"/>
    </ligand>
</feature>
<feature type="binding site" evidence="1">
    <location>
        <position position="110"/>
    </location>
    <ligand>
        <name>S-methyl-5'-thioadenosine</name>
        <dbReference type="ChEBI" id="CHEBI:17509"/>
    </ligand>
</feature>
<feature type="binding site" evidence="1">
    <location>
        <begin position="141"/>
        <end position="142"/>
    </location>
    <ligand>
        <name>S-methyl-5'-thioadenosine</name>
        <dbReference type="ChEBI" id="CHEBI:17509"/>
    </ligand>
</feature>
<feature type="binding site" evidence="1">
    <location>
        <begin position="160"/>
        <end position="163"/>
    </location>
    <ligand>
        <name>spermidine</name>
        <dbReference type="ChEBI" id="CHEBI:57834"/>
    </ligand>
</feature>
<feature type="binding site" evidence="1">
    <location>
        <position position="167"/>
    </location>
    <ligand>
        <name>S-methyl-5'-thioadenosine</name>
        <dbReference type="ChEBI" id="CHEBI:17509"/>
    </ligand>
</feature>
<dbReference type="EC" id="2.5.1.16" evidence="1"/>
<dbReference type="EMBL" id="AE017282">
    <property type="protein sequence ID" value="AAU91687.1"/>
    <property type="molecule type" value="Genomic_DNA"/>
</dbReference>
<dbReference type="RefSeq" id="WP_010961290.1">
    <property type="nucleotide sequence ID" value="NC_002977.6"/>
</dbReference>
<dbReference type="SMR" id="Q606H1"/>
<dbReference type="STRING" id="243233.MCA2046"/>
<dbReference type="GeneID" id="88224272"/>
<dbReference type="KEGG" id="mca:MCA2046"/>
<dbReference type="eggNOG" id="COG0421">
    <property type="taxonomic scope" value="Bacteria"/>
</dbReference>
<dbReference type="HOGENOM" id="CLU_048199_0_0_6"/>
<dbReference type="UniPathway" id="UPA00248">
    <property type="reaction ID" value="UER00314"/>
</dbReference>
<dbReference type="Proteomes" id="UP000006821">
    <property type="component" value="Chromosome"/>
</dbReference>
<dbReference type="GO" id="GO:0005829">
    <property type="term" value="C:cytosol"/>
    <property type="evidence" value="ECO:0007669"/>
    <property type="project" value="TreeGrafter"/>
</dbReference>
<dbReference type="GO" id="GO:0004766">
    <property type="term" value="F:spermidine synthase activity"/>
    <property type="evidence" value="ECO:0007669"/>
    <property type="project" value="UniProtKB-UniRule"/>
</dbReference>
<dbReference type="GO" id="GO:0008295">
    <property type="term" value="P:spermidine biosynthetic process"/>
    <property type="evidence" value="ECO:0007669"/>
    <property type="project" value="UniProtKB-UniRule"/>
</dbReference>
<dbReference type="CDD" id="cd02440">
    <property type="entry name" value="AdoMet_MTases"/>
    <property type="match status" value="1"/>
</dbReference>
<dbReference type="Gene3D" id="2.30.140.10">
    <property type="entry name" value="Spermidine synthase, tetramerisation domain"/>
    <property type="match status" value="1"/>
</dbReference>
<dbReference type="Gene3D" id="3.40.50.150">
    <property type="entry name" value="Vaccinia Virus protein VP39"/>
    <property type="match status" value="1"/>
</dbReference>
<dbReference type="HAMAP" id="MF_00198">
    <property type="entry name" value="Spermidine_synth"/>
    <property type="match status" value="1"/>
</dbReference>
<dbReference type="InterPro" id="IPR030374">
    <property type="entry name" value="PABS"/>
</dbReference>
<dbReference type="InterPro" id="IPR029063">
    <property type="entry name" value="SAM-dependent_MTases_sf"/>
</dbReference>
<dbReference type="InterPro" id="IPR001045">
    <property type="entry name" value="Spermi_synthase"/>
</dbReference>
<dbReference type="InterPro" id="IPR035246">
    <property type="entry name" value="Spermidine_synt_N"/>
</dbReference>
<dbReference type="InterPro" id="IPR037163">
    <property type="entry name" value="Spermidine_synt_N_sf"/>
</dbReference>
<dbReference type="NCBIfam" id="NF002010">
    <property type="entry name" value="PRK00811.1"/>
    <property type="match status" value="1"/>
</dbReference>
<dbReference type="NCBIfam" id="TIGR00417">
    <property type="entry name" value="speE"/>
    <property type="match status" value="1"/>
</dbReference>
<dbReference type="PANTHER" id="PTHR11558:SF11">
    <property type="entry name" value="SPERMIDINE SYNTHASE"/>
    <property type="match status" value="1"/>
</dbReference>
<dbReference type="PANTHER" id="PTHR11558">
    <property type="entry name" value="SPERMIDINE/SPERMINE SYNTHASE"/>
    <property type="match status" value="1"/>
</dbReference>
<dbReference type="Pfam" id="PF17284">
    <property type="entry name" value="Spermine_synt_N"/>
    <property type="match status" value="1"/>
</dbReference>
<dbReference type="Pfam" id="PF01564">
    <property type="entry name" value="Spermine_synth"/>
    <property type="match status" value="1"/>
</dbReference>
<dbReference type="SUPFAM" id="SSF53335">
    <property type="entry name" value="S-adenosyl-L-methionine-dependent methyltransferases"/>
    <property type="match status" value="1"/>
</dbReference>
<dbReference type="PROSITE" id="PS51006">
    <property type="entry name" value="PABS_2"/>
    <property type="match status" value="1"/>
</dbReference>